<proteinExistence type="inferred from homology"/>
<accession>Q6CTB9</accession>
<feature type="chain" id="PRO_0000410658" description="Biogenesis of lysosome-related organelles complex 1 subunit SNN1">
    <location>
        <begin position="1"/>
        <end position="99"/>
    </location>
</feature>
<feature type="coiled-coil region" evidence="2">
    <location>
        <begin position="34"/>
        <end position="94"/>
    </location>
</feature>
<organism>
    <name type="scientific">Kluyveromyces lactis (strain ATCC 8585 / CBS 2359 / DSM 70799 / NBRC 1267 / NRRL Y-1140 / WM37)</name>
    <name type="common">Yeast</name>
    <name type="synonym">Candida sphaerica</name>
    <dbReference type="NCBI Taxonomy" id="284590"/>
    <lineage>
        <taxon>Eukaryota</taxon>
        <taxon>Fungi</taxon>
        <taxon>Dikarya</taxon>
        <taxon>Ascomycota</taxon>
        <taxon>Saccharomycotina</taxon>
        <taxon>Saccharomycetes</taxon>
        <taxon>Saccharomycetales</taxon>
        <taxon>Saccharomycetaceae</taxon>
        <taxon>Kluyveromyces</taxon>
    </lineage>
</organism>
<name>SNAPN_KLULA</name>
<sequence length="99" mass="11390">MDIDAEDATKSGLHPIELCVYSLLSGNLESIYQSINELRESQAVLILRLKQLRETCKDEQDRINKYCSLNAEIERLDKLETKVDVVLKRYEKMVGSISE</sequence>
<keyword id="KW-0175">Coiled coil</keyword>
<keyword id="KW-0967">Endosome</keyword>
<keyword id="KW-1185">Reference proteome</keyword>
<keyword id="KW-0813">Transport</keyword>
<gene>
    <name type="primary">SNN1</name>
    <name type="ordered locus">KLLA0C13882g</name>
</gene>
<dbReference type="EMBL" id="CR382123">
    <property type="protein sequence ID" value="CAH01671.1"/>
    <property type="molecule type" value="Genomic_DNA"/>
</dbReference>
<dbReference type="RefSeq" id="XP_452820.1">
    <property type="nucleotide sequence ID" value="XM_452820.1"/>
</dbReference>
<dbReference type="SMR" id="Q6CTB9"/>
<dbReference type="FunCoup" id="Q6CTB9">
    <property type="interactions" value="35"/>
</dbReference>
<dbReference type="STRING" id="284590.Q6CTB9"/>
<dbReference type="PaxDb" id="284590-Q6CTB9"/>
<dbReference type="KEGG" id="kla:KLLA0_C13882g"/>
<dbReference type="eggNOG" id="ENOG502S7PY">
    <property type="taxonomic scope" value="Eukaryota"/>
</dbReference>
<dbReference type="HOGENOM" id="CLU_178727_0_0_1"/>
<dbReference type="InParanoid" id="Q6CTB9"/>
<dbReference type="OMA" id="IHPIELC"/>
<dbReference type="Proteomes" id="UP000000598">
    <property type="component" value="Chromosome C"/>
</dbReference>
<dbReference type="GO" id="GO:0005768">
    <property type="term" value="C:endosome"/>
    <property type="evidence" value="ECO:0007669"/>
    <property type="project" value="UniProtKB-SubCell"/>
</dbReference>
<comment type="function">
    <text evidence="1">Component of the biogenesis of lysosome-related organelles complex-1 (BLOC-1), a complex involved in endosomal cargo sorting.</text>
</comment>
<comment type="subunit">
    <text evidence="1">Component of the biogenesis of lysosome-related organelles complex-1 (BLOC-1).</text>
</comment>
<comment type="subcellular location">
    <subcellularLocation>
        <location evidence="1">Endosome</location>
    </subcellularLocation>
</comment>
<comment type="similarity">
    <text evidence="3">Belongs to the SNAPIN family.</text>
</comment>
<protein>
    <recommendedName>
        <fullName>Biogenesis of lysosome-related organelles complex 1 subunit SNN1</fullName>
        <shortName>BLOC-1 subunit SNN1</shortName>
    </recommendedName>
    <alternativeName>
        <fullName>SNAPIN-like protein 1</fullName>
    </alternativeName>
</protein>
<reference key="1">
    <citation type="journal article" date="2004" name="Nature">
        <title>Genome evolution in yeasts.</title>
        <authorList>
            <person name="Dujon B."/>
            <person name="Sherman D."/>
            <person name="Fischer G."/>
            <person name="Durrens P."/>
            <person name="Casaregola S."/>
            <person name="Lafontaine I."/>
            <person name="de Montigny J."/>
            <person name="Marck C."/>
            <person name="Neuveglise C."/>
            <person name="Talla E."/>
            <person name="Goffard N."/>
            <person name="Frangeul L."/>
            <person name="Aigle M."/>
            <person name="Anthouard V."/>
            <person name="Babour A."/>
            <person name="Barbe V."/>
            <person name="Barnay S."/>
            <person name="Blanchin S."/>
            <person name="Beckerich J.-M."/>
            <person name="Beyne E."/>
            <person name="Bleykasten C."/>
            <person name="Boisrame A."/>
            <person name="Boyer J."/>
            <person name="Cattolico L."/>
            <person name="Confanioleri F."/>
            <person name="de Daruvar A."/>
            <person name="Despons L."/>
            <person name="Fabre E."/>
            <person name="Fairhead C."/>
            <person name="Ferry-Dumazet H."/>
            <person name="Groppi A."/>
            <person name="Hantraye F."/>
            <person name="Hennequin C."/>
            <person name="Jauniaux N."/>
            <person name="Joyet P."/>
            <person name="Kachouri R."/>
            <person name="Kerrest A."/>
            <person name="Koszul R."/>
            <person name="Lemaire M."/>
            <person name="Lesur I."/>
            <person name="Ma L."/>
            <person name="Muller H."/>
            <person name="Nicaud J.-M."/>
            <person name="Nikolski M."/>
            <person name="Oztas S."/>
            <person name="Ozier-Kalogeropoulos O."/>
            <person name="Pellenz S."/>
            <person name="Potier S."/>
            <person name="Richard G.-F."/>
            <person name="Straub M.-L."/>
            <person name="Suleau A."/>
            <person name="Swennen D."/>
            <person name="Tekaia F."/>
            <person name="Wesolowski-Louvel M."/>
            <person name="Westhof E."/>
            <person name="Wirth B."/>
            <person name="Zeniou-Meyer M."/>
            <person name="Zivanovic Y."/>
            <person name="Bolotin-Fukuhara M."/>
            <person name="Thierry A."/>
            <person name="Bouchier C."/>
            <person name="Caudron B."/>
            <person name="Scarpelli C."/>
            <person name="Gaillardin C."/>
            <person name="Weissenbach J."/>
            <person name="Wincker P."/>
            <person name="Souciet J.-L."/>
        </authorList>
    </citation>
    <scope>NUCLEOTIDE SEQUENCE [LARGE SCALE GENOMIC DNA]</scope>
    <source>
        <strain>ATCC 8585 / CBS 2359 / DSM 70799 / NBRC 1267 / NRRL Y-1140 / WM37</strain>
    </source>
</reference>
<evidence type="ECO:0000250" key="1"/>
<evidence type="ECO:0000255" key="2"/>
<evidence type="ECO:0000305" key="3"/>